<name>DNAB_HAEIN</name>
<organism>
    <name type="scientific">Haemophilus influenzae (strain ATCC 51907 / DSM 11121 / KW20 / Rd)</name>
    <dbReference type="NCBI Taxonomy" id="71421"/>
    <lineage>
        <taxon>Bacteria</taxon>
        <taxon>Pseudomonadati</taxon>
        <taxon>Pseudomonadota</taxon>
        <taxon>Gammaproteobacteria</taxon>
        <taxon>Pasteurellales</taxon>
        <taxon>Pasteurellaceae</taxon>
        <taxon>Haemophilus</taxon>
    </lineage>
</organism>
<gene>
    <name type="primary">dnaB</name>
    <name type="ordered locus">HI_1574</name>
</gene>
<evidence type="ECO:0000250" key="1">
    <source>
        <dbReference type="UniProtKB" id="P0ACB0"/>
    </source>
</evidence>
<evidence type="ECO:0000255" key="2">
    <source>
        <dbReference type="PROSITE-ProRule" id="PRU00596"/>
    </source>
</evidence>
<evidence type="ECO:0000256" key="3">
    <source>
        <dbReference type="SAM" id="MobiDB-lite"/>
    </source>
</evidence>
<evidence type="ECO:0000305" key="4"/>
<comment type="function">
    <text evidence="1">The main replicative DNA helicase, it participates in initiation and elongation during chromosome replication. Travels ahead of the DNA replisome, separating dsDNA into templates for DNA synthesis. A processive ATP-dependent 5'-3' DNA helicase it has DNA-dependent ATPase activity.</text>
</comment>
<comment type="catalytic activity">
    <reaction evidence="1">
        <text>Couples ATP hydrolysis with the unwinding of duplex DNA at the replication fork by translocating in the 5'-3' direction. This creates two antiparallel DNA single strands (ssDNA). The leading ssDNA polymer is the template for DNA polymerase III holoenzyme which synthesizes a continuous strand.</text>
        <dbReference type="EC" id="5.6.2.3"/>
    </reaction>
</comment>
<comment type="catalytic activity">
    <reaction evidence="1">
        <text>ATP + H2O = ADP + phosphate + H(+)</text>
        <dbReference type="Rhea" id="RHEA:13065"/>
        <dbReference type="ChEBI" id="CHEBI:15377"/>
        <dbReference type="ChEBI" id="CHEBI:15378"/>
        <dbReference type="ChEBI" id="CHEBI:30616"/>
        <dbReference type="ChEBI" id="CHEBI:43474"/>
        <dbReference type="ChEBI" id="CHEBI:456216"/>
        <dbReference type="EC" id="5.6.2.3"/>
    </reaction>
</comment>
<comment type="subunit">
    <text evidence="1">Homohexamer.</text>
</comment>
<comment type="similarity">
    <text evidence="4">Belongs to the helicase family. DnaB subfamily.</text>
</comment>
<comment type="sequence caution" evidence="4">
    <conflict type="erroneous initiation">
        <sequence resource="EMBL-CDS" id="AAC23217"/>
    </conflict>
    <text>Extended N-terminus.</text>
</comment>
<sequence length="468" mass="52362">MASQPQIKSSDKKTAQVSIPPHSTEAEQAVLGGIMLSNQHWDGIAERVIADDFYTFQHRLIFTEMEHLMRNQSPIDLITLDQALRSRGVSDEVGGFAYLAELSNNTPNAINILAYADIVREKAILRELISVGNRIAENSYSPKGQDIKLILDEAEREVFAIAEKRTTSSEGPQNVINVLESTIEKIDILSKLENHSGVTGVTTGFTDLDKKTAGLQPSDLIIVAARPSMGKTTFAMNLCENAAMASEKPVLVFSLEMPAEQIMMRMIASLARVDQTKIRTGQNLDEIEWNKIASVVGMFKQKNNLFIDDSSGLTPTDVRSRARRVYRENGGLSMIMVDYLQLMRAPAFSDNRTLEIAEISRSLKALAKELQVPVVALSQLNRTLEQRGDKRPVNSDLRESGSIEQDADLIMFIYRDEVYNDNSEDKGVAEIIIGKQRNGPIGRVRLKFNGQFSRFDNLAEQREYRDDY</sequence>
<reference key="1">
    <citation type="journal article" date="1995" name="Science">
        <title>Whole-genome random sequencing and assembly of Haemophilus influenzae Rd.</title>
        <authorList>
            <person name="Fleischmann R.D."/>
            <person name="Adams M.D."/>
            <person name="White O."/>
            <person name="Clayton R.A."/>
            <person name="Kirkness E.F."/>
            <person name="Kerlavage A.R."/>
            <person name="Bult C.J."/>
            <person name="Tomb J.-F."/>
            <person name="Dougherty B.A."/>
            <person name="Merrick J.M."/>
            <person name="McKenney K."/>
            <person name="Sutton G.G."/>
            <person name="FitzHugh W."/>
            <person name="Fields C.A."/>
            <person name="Gocayne J.D."/>
            <person name="Scott J.D."/>
            <person name="Shirley R."/>
            <person name="Liu L.-I."/>
            <person name="Glodek A."/>
            <person name="Kelley J.M."/>
            <person name="Weidman J.F."/>
            <person name="Phillips C.A."/>
            <person name="Spriggs T."/>
            <person name="Hedblom E."/>
            <person name="Cotton M.D."/>
            <person name="Utterback T.R."/>
            <person name="Hanna M.C."/>
            <person name="Nguyen D.T."/>
            <person name="Saudek D.M."/>
            <person name="Brandon R.C."/>
            <person name="Fine L.D."/>
            <person name="Fritchman J.L."/>
            <person name="Fuhrmann J.L."/>
            <person name="Geoghagen N.S.M."/>
            <person name="Gnehm C.L."/>
            <person name="McDonald L.A."/>
            <person name="Small K.V."/>
            <person name="Fraser C.M."/>
            <person name="Smith H.O."/>
            <person name="Venter J.C."/>
        </authorList>
    </citation>
    <scope>NUCLEOTIDE SEQUENCE [LARGE SCALE GENOMIC DNA]</scope>
    <source>
        <strain>ATCC 51907 / DSM 11121 / KW20 / Rd</strain>
    </source>
</reference>
<protein>
    <recommendedName>
        <fullName>Replicative DNA helicase DnaB</fullName>
        <ecNumber evidence="1">5.6.2.3</ecNumber>
    </recommendedName>
    <alternativeName>
        <fullName evidence="4">DNA 5'-3' helicase DnaB</fullName>
    </alternativeName>
</protein>
<accession>P45256</accession>
<feature type="chain" id="PRO_0000102022" description="Replicative DNA helicase DnaB">
    <location>
        <begin position="1"/>
        <end position="468"/>
    </location>
</feature>
<feature type="domain" description="SF4 helicase" evidence="2">
    <location>
        <begin position="194"/>
        <end position="462"/>
    </location>
</feature>
<feature type="region of interest" description="Disordered" evidence="3">
    <location>
        <begin position="1"/>
        <end position="22"/>
    </location>
</feature>
<feature type="binding site" evidence="2">
    <location>
        <begin position="225"/>
        <end position="232"/>
    </location>
    <ligand>
        <name>ATP</name>
        <dbReference type="ChEBI" id="CHEBI:30616"/>
    </ligand>
</feature>
<dbReference type="EC" id="5.6.2.3" evidence="1"/>
<dbReference type="EMBL" id="L42023">
    <property type="protein sequence ID" value="AAC23217.1"/>
    <property type="status" value="ALT_INIT"/>
    <property type="molecule type" value="Genomic_DNA"/>
</dbReference>
<dbReference type="PIR" id="D64130">
    <property type="entry name" value="D64130"/>
</dbReference>
<dbReference type="RefSeq" id="NP_439720.1">
    <property type="nucleotide sequence ID" value="NC_000907.1"/>
</dbReference>
<dbReference type="SMR" id="P45256"/>
<dbReference type="STRING" id="71421.HI_1574"/>
<dbReference type="EnsemblBacteria" id="AAC23217">
    <property type="protein sequence ID" value="AAC23217"/>
    <property type="gene ID" value="HI_1574"/>
</dbReference>
<dbReference type="KEGG" id="hin:HI_1574"/>
<dbReference type="PATRIC" id="fig|71421.8.peg.1647"/>
<dbReference type="eggNOG" id="COG0305">
    <property type="taxonomic scope" value="Bacteria"/>
</dbReference>
<dbReference type="HOGENOM" id="CLU_005373_0_0_6"/>
<dbReference type="OrthoDB" id="9773982at2"/>
<dbReference type="PhylomeDB" id="P45256"/>
<dbReference type="Proteomes" id="UP000000579">
    <property type="component" value="Chromosome"/>
</dbReference>
<dbReference type="GO" id="GO:0005829">
    <property type="term" value="C:cytosol"/>
    <property type="evidence" value="ECO:0000318"/>
    <property type="project" value="GO_Central"/>
</dbReference>
<dbReference type="GO" id="GO:1990077">
    <property type="term" value="C:primosome complex"/>
    <property type="evidence" value="ECO:0007669"/>
    <property type="project" value="UniProtKB-KW"/>
</dbReference>
<dbReference type="GO" id="GO:0005524">
    <property type="term" value="F:ATP binding"/>
    <property type="evidence" value="ECO:0007669"/>
    <property type="project" value="UniProtKB-KW"/>
</dbReference>
<dbReference type="GO" id="GO:0016887">
    <property type="term" value="F:ATP hydrolysis activity"/>
    <property type="evidence" value="ECO:0007669"/>
    <property type="project" value="InterPro"/>
</dbReference>
<dbReference type="GO" id="GO:0003677">
    <property type="term" value="F:DNA binding"/>
    <property type="evidence" value="ECO:0007669"/>
    <property type="project" value="UniProtKB-KW"/>
</dbReference>
<dbReference type="GO" id="GO:0003678">
    <property type="term" value="F:DNA helicase activity"/>
    <property type="evidence" value="ECO:0000318"/>
    <property type="project" value="GO_Central"/>
</dbReference>
<dbReference type="GO" id="GO:0006260">
    <property type="term" value="P:DNA replication"/>
    <property type="evidence" value="ECO:0000318"/>
    <property type="project" value="GO_Central"/>
</dbReference>
<dbReference type="GO" id="GO:0006269">
    <property type="term" value="P:DNA replication, synthesis of primer"/>
    <property type="evidence" value="ECO:0007669"/>
    <property type="project" value="UniProtKB-KW"/>
</dbReference>
<dbReference type="CDD" id="cd00984">
    <property type="entry name" value="DnaB_C"/>
    <property type="match status" value="1"/>
</dbReference>
<dbReference type="FunFam" id="1.10.860.10:FF:000001">
    <property type="entry name" value="Replicative DNA helicase"/>
    <property type="match status" value="1"/>
</dbReference>
<dbReference type="FunFam" id="3.40.50.300:FF:000076">
    <property type="entry name" value="Replicative DNA helicase"/>
    <property type="match status" value="1"/>
</dbReference>
<dbReference type="Gene3D" id="1.10.860.10">
    <property type="entry name" value="DNAb Helicase, Chain A"/>
    <property type="match status" value="1"/>
</dbReference>
<dbReference type="Gene3D" id="3.40.50.300">
    <property type="entry name" value="P-loop containing nucleotide triphosphate hydrolases"/>
    <property type="match status" value="1"/>
</dbReference>
<dbReference type="InterPro" id="IPR003593">
    <property type="entry name" value="AAA+_ATPase"/>
</dbReference>
<dbReference type="InterPro" id="IPR036185">
    <property type="entry name" value="DNA_heli_DnaB-like_N_sf"/>
</dbReference>
<dbReference type="InterPro" id="IPR007692">
    <property type="entry name" value="DNA_helicase_DnaB"/>
</dbReference>
<dbReference type="InterPro" id="IPR007694">
    <property type="entry name" value="DNA_helicase_DnaB-like_C"/>
</dbReference>
<dbReference type="InterPro" id="IPR007693">
    <property type="entry name" value="DNA_helicase_DnaB-like_N"/>
</dbReference>
<dbReference type="InterPro" id="IPR016136">
    <property type="entry name" value="DNA_helicase_N/primase_C"/>
</dbReference>
<dbReference type="InterPro" id="IPR027417">
    <property type="entry name" value="P-loop_NTPase"/>
</dbReference>
<dbReference type="NCBIfam" id="TIGR00665">
    <property type="entry name" value="DnaB"/>
    <property type="match status" value="1"/>
</dbReference>
<dbReference type="NCBIfam" id="NF004384">
    <property type="entry name" value="PRK05748.1"/>
    <property type="match status" value="1"/>
</dbReference>
<dbReference type="NCBIfam" id="NF005369">
    <property type="entry name" value="PRK06904.1"/>
    <property type="match status" value="1"/>
</dbReference>
<dbReference type="PANTHER" id="PTHR30153:SF2">
    <property type="entry name" value="REPLICATIVE DNA HELICASE"/>
    <property type="match status" value="1"/>
</dbReference>
<dbReference type="PANTHER" id="PTHR30153">
    <property type="entry name" value="REPLICATIVE DNA HELICASE DNAB"/>
    <property type="match status" value="1"/>
</dbReference>
<dbReference type="Pfam" id="PF00772">
    <property type="entry name" value="DnaB"/>
    <property type="match status" value="1"/>
</dbReference>
<dbReference type="Pfam" id="PF03796">
    <property type="entry name" value="DnaB_C"/>
    <property type="match status" value="1"/>
</dbReference>
<dbReference type="SMART" id="SM00382">
    <property type="entry name" value="AAA"/>
    <property type="match status" value="1"/>
</dbReference>
<dbReference type="SUPFAM" id="SSF48024">
    <property type="entry name" value="N-terminal domain of DnaB helicase"/>
    <property type="match status" value="1"/>
</dbReference>
<dbReference type="SUPFAM" id="SSF52540">
    <property type="entry name" value="P-loop containing nucleoside triphosphate hydrolases"/>
    <property type="match status" value="1"/>
</dbReference>
<dbReference type="PROSITE" id="PS51199">
    <property type="entry name" value="SF4_HELICASE"/>
    <property type="match status" value="1"/>
</dbReference>
<proteinExistence type="inferred from homology"/>
<keyword id="KW-0067">ATP-binding</keyword>
<keyword id="KW-0235">DNA replication</keyword>
<keyword id="KW-0238">DNA-binding</keyword>
<keyword id="KW-0347">Helicase</keyword>
<keyword id="KW-0378">Hydrolase</keyword>
<keyword id="KW-0413">Isomerase</keyword>
<keyword id="KW-0547">Nucleotide-binding</keyword>
<keyword id="KW-0639">Primosome</keyword>
<keyword id="KW-1185">Reference proteome</keyword>